<keyword id="KW-1185">Reference proteome</keyword>
<evidence type="ECO:0000250" key="1"/>
<evidence type="ECO:0000305" key="2"/>
<sequence length="214" mass="24471">MTISANKRSVMSLFSDKNDIYSHQVRIVLAEKGVPYELENINPNTISEDFLELNPYANIPTLVDRDLVLFNSRIIMEYLDERFPHPPLMPVYPVLRGKSRLTMHRIEQDWYSLIDIVNKNPESKEAKKALSQLREEMLALGSVFAATSYFMSDEFSLVDCYIAPLLWRMHNLGVQFTGAGGKAIKAYMTKVFQRDSFSQSIGGSAPKHLMDDKE</sequence>
<reference key="1">
    <citation type="submission" date="2003-06" db="EMBL/GenBank/DDBJ databases">
        <title>The complete genome sequence of Haemophilus ducreyi.</title>
        <authorList>
            <person name="Munson R.S. Jr."/>
            <person name="Ray W.C."/>
            <person name="Mahairas G."/>
            <person name="Sabo P."/>
            <person name="Mungur R."/>
            <person name="Johnson L."/>
            <person name="Nguyen D."/>
            <person name="Wang J."/>
            <person name="Forst C."/>
            <person name="Hood L."/>
        </authorList>
    </citation>
    <scope>NUCLEOTIDE SEQUENCE [LARGE SCALE GENOMIC DNA]</scope>
    <source>
        <strain>35000HP / ATCC 700724</strain>
    </source>
</reference>
<feature type="chain" id="PRO_0000185879" description="Stringent starvation protein A homolog">
    <location>
        <begin position="1"/>
        <end position="214"/>
    </location>
</feature>
<feature type="domain" description="GST N-terminal">
    <location>
        <begin position="9"/>
        <end position="87"/>
    </location>
</feature>
<feature type="domain" description="GST C-terminal">
    <location>
        <begin position="92"/>
        <end position="209"/>
    </location>
</feature>
<proteinExistence type="inferred from homology"/>
<comment type="function">
    <text evidence="1">Forms an equimolar complex with the RNA polymerase holoenzyme (RNAP) but not with the core enzyme.</text>
</comment>
<comment type="similarity">
    <text evidence="2">Belongs to the GST superfamily. HSP26 family.</text>
</comment>
<dbReference type="EMBL" id="AE017143">
    <property type="protein sequence ID" value="AAP96231.1"/>
    <property type="molecule type" value="Genomic_DNA"/>
</dbReference>
<dbReference type="RefSeq" id="WP_010945280.1">
    <property type="nucleotide sequence ID" value="NC_002940.2"/>
</dbReference>
<dbReference type="SMR" id="Q7VLK4"/>
<dbReference type="STRING" id="233412.HD_1425"/>
<dbReference type="KEGG" id="hdu:HD_1425"/>
<dbReference type="eggNOG" id="COG0625">
    <property type="taxonomic scope" value="Bacteria"/>
</dbReference>
<dbReference type="HOGENOM" id="CLU_011226_9_3_6"/>
<dbReference type="OrthoDB" id="9781431at2"/>
<dbReference type="Proteomes" id="UP000001022">
    <property type="component" value="Chromosome"/>
</dbReference>
<dbReference type="GO" id="GO:0005737">
    <property type="term" value="C:cytoplasm"/>
    <property type="evidence" value="ECO:0007669"/>
    <property type="project" value="TreeGrafter"/>
</dbReference>
<dbReference type="CDD" id="cd03186">
    <property type="entry name" value="GST_C_SspA"/>
    <property type="match status" value="1"/>
</dbReference>
<dbReference type="CDD" id="cd03059">
    <property type="entry name" value="GST_N_SspA"/>
    <property type="match status" value="1"/>
</dbReference>
<dbReference type="Gene3D" id="1.20.1050.10">
    <property type="match status" value="1"/>
</dbReference>
<dbReference type="Gene3D" id="3.40.30.10">
    <property type="entry name" value="Glutaredoxin"/>
    <property type="match status" value="1"/>
</dbReference>
<dbReference type="InterPro" id="IPR010987">
    <property type="entry name" value="Glutathione-S-Trfase_C-like"/>
</dbReference>
<dbReference type="InterPro" id="IPR036282">
    <property type="entry name" value="Glutathione-S-Trfase_C_sf"/>
</dbReference>
<dbReference type="InterPro" id="IPR040079">
    <property type="entry name" value="Glutathione_S-Trfase"/>
</dbReference>
<dbReference type="InterPro" id="IPR004045">
    <property type="entry name" value="Glutathione_S-Trfase_N"/>
</dbReference>
<dbReference type="InterPro" id="IPR004046">
    <property type="entry name" value="GST_C"/>
</dbReference>
<dbReference type="InterPro" id="IPR050983">
    <property type="entry name" value="GST_Omega/HSP26"/>
</dbReference>
<dbReference type="InterPro" id="IPR034342">
    <property type="entry name" value="SspA_C"/>
</dbReference>
<dbReference type="InterPro" id="IPR034341">
    <property type="entry name" value="SspA_N"/>
</dbReference>
<dbReference type="InterPro" id="IPR036249">
    <property type="entry name" value="Thioredoxin-like_sf"/>
</dbReference>
<dbReference type="NCBIfam" id="NF007016">
    <property type="entry name" value="PRK09481.1"/>
    <property type="match status" value="1"/>
</dbReference>
<dbReference type="PANTHER" id="PTHR43968">
    <property type="match status" value="1"/>
</dbReference>
<dbReference type="PANTHER" id="PTHR43968:SF6">
    <property type="entry name" value="GLUTATHIONE S-TRANSFERASE OMEGA"/>
    <property type="match status" value="1"/>
</dbReference>
<dbReference type="Pfam" id="PF00043">
    <property type="entry name" value="GST_C"/>
    <property type="match status" value="1"/>
</dbReference>
<dbReference type="Pfam" id="PF02798">
    <property type="entry name" value="GST_N"/>
    <property type="match status" value="1"/>
</dbReference>
<dbReference type="SFLD" id="SFLDS00019">
    <property type="entry name" value="Glutathione_Transferase_(cytos"/>
    <property type="match status" value="1"/>
</dbReference>
<dbReference type="SFLD" id="SFLDG00358">
    <property type="entry name" value="Main_(cytGST)"/>
    <property type="match status" value="1"/>
</dbReference>
<dbReference type="SUPFAM" id="SSF47616">
    <property type="entry name" value="GST C-terminal domain-like"/>
    <property type="match status" value="1"/>
</dbReference>
<dbReference type="SUPFAM" id="SSF52833">
    <property type="entry name" value="Thioredoxin-like"/>
    <property type="match status" value="1"/>
</dbReference>
<dbReference type="PROSITE" id="PS50405">
    <property type="entry name" value="GST_CTER"/>
    <property type="match status" value="1"/>
</dbReference>
<dbReference type="PROSITE" id="PS50404">
    <property type="entry name" value="GST_NTER"/>
    <property type="match status" value="1"/>
</dbReference>
<protein>
    <recommendedName>
        <fullName>Stringent starvation protein A homolog</fullName>
    </recommendedName>
</protein>
<gene>
    <name type="primary">sspA</name>
    <name type="ordered locus">HD_1425</name>
</gene>
<name>SSPA_HAEDU</name>
<organism>
    <name type="scientific">Haemophilus ducreyi (strain 35000HP / ATCC 700724)</name>
    <dbReference type="NCBI Taxonomy" id="233412"/>
    <lineage>
        <taxon>Bacteria</taxon>
        <taxon>Pseudomonadati</taxon>
        <taxon>Pseudomonadota</taxon>
        <taxon>Gammaproteobacteria</taxon>
        <taxon>Pasteurellales</taxon>
        <taxon>Pasteurellaceae</taxon>
        <taxon>Haemophilus</taxon>
    </lineage>
</organism>
<accession>Q7VLK4</accession>